<evidence type="ECO:0000255" key="1">
    <source>
        <dbReference type="HAMAP-Rule" id="MF_00262"/>
    </source>
</evidence>
<sequence length="93" mass="10527">MGIMDLFKKKSSGNVAKDRLKLVLVSDRANCSSEMMEMMKRDIIEVISRYMDIDAEALDVKITETESDSNNGMVPALVANIPIRDMKHRPDPR</sequence>
<keyword id="KW-0131">Cell cycle</keyword>
<keyword id="KW-0132">Cell division</keyword>
<proteinExistence type="inferred from homology"/>
<reference key="1">
    <citation type="journal article" date="2009" name="Proc. Natl. Acad. Sci. U.S.A.">
        <title>Characterizing a model human gut microbiota composed of members of its two dominant bacterial phyla.</title>
        <authorList>
            <person name="Mahowald M.A."/>
            <person name="Rey F.E."/>
            <person name="Seedorf H."/>
            <person name="Turnbaugh P.J."/>
            <person name="Fulton R.S."/>
            <person name="Wollam A."/>
            <person name="Shah N."/>
            <person name="Wang C."/>
            <person name="Magrini V."/>
            <person name="Wilson R.K."/>
            <person name="Cantarel B.L."/>
            <person name="Coutinho P.M."/>
            <person name="Henrissat B."/>
            <person name="Crock L.W."/>
            <person name="Russell A."/>
            <person name="Verberkmoes N.C."/>
            <person name="Hettich R.L."/>
            <person name="Gordon J.I."/>
        </authorList>
    </citation>
    <scope>NUCLEOTIDE SEQUENCE [LARGE SCALE GENOMIC DNA]</scope>
    <source>
        <strain>ATCC 33656 / DSM 3377 / JCM 17463 / KCTC 5835 / LMG 30912 / VPI 0990</strain>
    </source>
</reference>
<protein>
    <recommendedName>
        <fullName evidence="1">Cell division topological specificity factor</fullName>
    </recommendedName>
</protein>
<name>MINE_AGARV</name>
<accession>C4Z9Q2</accession>
<feature type="chain" id="PRO_1000204682" description="Cell division topological specificity factor">
    <location>
        <begin position="1"/>
        <end position="93"/>
    </location>
</feature>
<gene>
    <name evidence="1" type="primary">minE</name>
    <name type="ordered locus">EUBREC_0095</name>
</gene>
<organism>
    <name type="scientific">Agathobacter rectalis (strain ATCC 33656 / DSM 3377 / JCM 17463 / KCTC 5835 / VPI 0990)</name>
    <name type="common">Eubacterium rectale</name>
    <dbReference type="NCBI Taxonomy" id="515619"/>
    <lineage>
        <taxon>Bacteria</taxon>
        <taxon>Bacillati</taxon>
        <taxon>Bacillota</taxon>
        <taxon>Clostridia</taxon>
        <taxon>Lachnospirales</taxon>
        <taxon>Lachnospiraceae</taxon>
        <taxon>Agathobacter</taxon>
    </lineage>
</organism>
<dbReference type="EMBL" id="CP001107">
    <property type="protein sequence ID" value="ACR73900.1"/>
    <property type="molecule type" value="Genomic_DNA"/>
</dbReference>
<dbReference type="RefSeq" id="WP_012741021.1">
    <property type="nucleotide sequence ID" value="NZ_CAXSYD010000028.1"/>
</dbReference>
<dbReference type="STRING" id="515619.EUBREC_0095"/>
<dbReference type="PaxDb" id="515619-EUBREC_0095"/>
<dbReference type="GeneID" id="86987031"/>
<dbReference type="KEGG" id="ere:EUBREC_0095"/>
<dbReference type="HOGENOM" id="CLU_137929_1_0_9"/>
<dbReference type="Proteomes" id="UP000001477">
    <property type="component" value="Chromosome"/>
</dbReference>
<dbReference type="GO" id="GO:0051301">
    <property type="term" value="P:cell division"/>
    <property type="evidence" value="ECO:0007669"/>
    <property type="project" value="UniProtKB-KW"/>
</dbReference>
<dbReference type="GO" id="GO:0032955">
    <property type="term" value="P:regulation of division septum assembly"/>
    <property type="evidence" value="ECO:0007669"/>
    <property type="project" value="InterPro"/>
</dbReference>
<dbReference type="Gene3D" id="3.30.1070.10">
    <property type="entry name" value="Cell division topological specificity factor MinE"/>
    <property type="match status" value="1"/>
</dbReference>
<dbReference type="HAMAP" id="MF_00262">
    <property type="entry name" value="MinE"/>
    <property type="match status" value="1"/>
</dbReference>
<dbReference type="InterPro" id="IPR005527">
    <property type="entry name" value="MinE"/>
</dbReference>
<dbReference type="InterPro" id="IPR036707">
    <property type="entry name" value="MinE_sf"/>
</dbReference>
<dbReference type="NCBIfam" id="TIGR01215">
    <property type="entry name" value="minE"/>
    <property type="match status" value="1"/>
</dbReference>
<dbReference type="NCBIfam" id="NF001422">
    <property type="entry name" value="PRK00296.1"/>
    <property type="match status" value="1"/>
</dbReference>
<dbReference type="Pfam" id="PF03776">
    <property type="entry name" value="MinE"/>
    <property type="match status" value="1"/>
</dbReference>
<dbReference type="SUPFAM" id="SSF55229">
    <property type="entry name" value="Cell division protein MinE topological specificity domain"/>
    <property type="match status" value="1"/>
</dbReference>
<comment type="function">
    <text evidence="1">Prevents the cell division inhibition by proteins MinC and MinD at internal division sites while permitting inhibition at polar sites. This ensures cell division at the proper site by restricting the formation of a division septum at the midpoint of the long axis of the cell.</text>
</comment>
<comment type="similarity">
    <text evidence="1">Belongs to the MinE family.</text>
</comment>